<sequence>MKLVNLKQAILQAWKERWSDYQWAINMKKFFPKGVTWDILNLAEALLDQAMIGPAPNPLILSYLKYAINSQMVSYSTVLTAISKFDDFSRDLCIQSLLEIMDMFCDNLSCHGKAEECIGLCRALMSALNWLLRCATFYTDKLKDVLDPVAGENHLSMCLQRLKSILGSTKNRALIHIAKLEEPTSWTSVEQSQLRLSESISLLPSVQLRNQAEECVSLIRSIPSMLSVHSDQLQTNGFPTVHAVVMLEGTMNLTGDAQPLVEQMNTVKRMQRIPLHLFLLEVWKACIVGLIESPEGTEELKWTAFTFLKIPQALAKLKKLSSMEQDFNEDMKCAFEYLLKLTPLLDKADQRCNCDCVSLLLQECNKLGLLSEQNMENLMAKRTADREQAPRLKSSENSTIQPNPGLILRAEPTVTNILKTMDADHSKSPEGLLGVLGHMLSGKSLDLLLAAAAATGKLKSFARKFIQLNEFTRHIGVESSKAANVRALLFDISFLMLCHVAQTYGSEMILSEGCPGGEMPFFESWMQTCMPGEGRVLNPDHPCFRHPDIAKVEALVALLNTSTEMKLAQTKWHEVCLSIPAAILEIHNAWENGVLSSEAIQKITDNIKGKVCSLAVCAVAWLVAHVRMLGLDERDKSLQMIRQLGSPMFGDNTLQFYSERVIIMSSILDNMCSEVLQQTTTQIKFSAAGSEPMPYIHRLPPKTPIKEVLRGAFSSTLEKGWVDSRTLHNFDTLLHMGGVYWFCNNLVKELLRETRLEFALRAVELLYAIFCLDMQQLTLTLLGHVLPSLLTDSAKWHMLMDPPGRALAKLSVWCAMTSYSTQNKGQPSPRQRKRHREDIEDYSSLFPLDDTQQSKLMRLLSSNEEEHNVQANPVDRPMNSSLSASQIHNISSKEPLNRVLANLFLLISSVLGAKTAGAQTQFVQWFMEECVESLELGGKGCILQFMPFSMVSELVKVSTLSSPKIVLAITDLTLPLGRRVAAKALTAL</sequence>
<dbReference type="EMBL" id="BC043802">
    <property type="protein sequence ID" value="AAH43802.1"/>
    <property type="molecule type" value="mRNA"/>
</dbReference>
<dbReference type="RefSeq" id="NP_001080393.1">
    <property type="nucleotide sequence ID" value="NM_001086924.1"/>
</dbReference>
<dbReference type="RefSeq" id="XP_018089579.1">
    <property type="nucleotide sequence ID" value="XM_018234090.1"/>
</dbReference>
<dbReference type="RefSeq" id="XP_018089580.1">
    <property type="nucleotide sequence ID" value="XM_018234091.1"/>
</dbReference>
<dbReference type="SMR" id="Q6PI53"/>
<dbReference type="IntAct" id="Q6PI53">
    <property type="interactions" value="1"/>
</dbReference>
<dbReference type="MINT" id="Q6PI53"/>
<dbReference type="GeneID" id="380085"/>
<dbReference type="KEGG" id="xla:380085"/>
<dbReference type="AGR" id="Xenbase:XB-GENE-968191"/>
<dbReference type="CTD" id="380085"/>
<dbReference type="Xenbase" id="XB-GENE-968191">
    <property type="gene designation" value="med24.L"/>
</dbReference>
<dbReference type="OMA" id="RWSDSQW"/>
<dbReference type="OrthoDB" id="21216at2759"/>
<dbReference type="Proteomes" id="UP000186698">
    <property type="component" value="Chromosome 9_10L"/>
</dbReference>
<dbReference type="Bgee" id="380085">
    <property type="expression patterns" value="Expressed in ovary and 19 other cell types or tissues"/>
</dbReference>
<dbReference type="GO" id="GO:0016592">
    <property type="term" value="C:mediator complex"/>
    <property type="evidence" value="ECO:0000318"/>
    <property type="project" value="GO_Central"/>
</dbReference>
<dbReference type="GO" id="GO:0003712">
    <property type="term" value="F:transcription coregulator activity"/>
    <property type="evidence" value="ECO:0000318"/>
    <property type="project" value="GO_Central"/>
</dbReference>
<dbReference type="GO" id="GO:0060261">
    <property type="term" value="P:positive regulation of transcription initiation by RNA polymerase II"/>
    <property type="evidence" value="ECO:0000318"/>
    <property type="project" value="GO_Central"/>
</dbReference>
<dbReference type="InterPro" id="IPR021429">
    <property type="entry name" value="Mediator_Med24"/>
</dbReference>
<dbReference type="PANTHER" id="PTHR12898">
    <property type="entry name" value="MEDIATOR OF RNA POLYMERASE II TRANSCRIPTION SUBUNIT 24"/>
    <property type="match status" value="1"/>
</dbReference>
<dbReference type="PANTHER" id="PTHR12898:SF1">
    <property type="entry name" value="MEDIATOR OF RNA POLYMERASE II TRANSCRIPTION SUBUNIT 24"/>
    <property type="match status" value="1"/>
</dbReference>
<dbReference type="Pfam" id="PF11277">
    <property type="entry name" value="Med24_N"/>
    <property type="match status" value="1"/>
</dbReference>
<protein>
    <recommendedName>
        <fullName>Mediator of RNA polymerase II transcription subunit 24</fullName>
    </recommendedName>
    <alternativeName>
        <fullName>Mediator complex subunit 24</fullName>
    </alternativeName>
</protein>
<accession>Q6PI53</accession>
<name>MED24_XENLA</name>
<reference key="1">
    <citation type="submission" date="2003-01" db="EMBL/GenBank/DDBJ databases">
        <authorList>
            <consortium name="NIH - Xenopus Gene Collection (XGC) project"/>
        </authorList>
    </citation>
    <scope>NUCLEOTIDE SEQUENCE [LARGE SCALE MRNA]</scope>
    <source>
        <tissue>Embryo</tissue>
    </source>
</reference>
<proteinExistence type="evidence at transcript level"/>
<keyword id="KW-0010">Activator</keyword>
<keyword id="KW-0539">Nucleus</keyword>
<keyword id="KW-1185">Reference proteome</keyword>
<keyword id="KW-0677">Repeat</keyword>
<keyword id="KW-0804">Transcription</keyword>
<keyword id="KW-0805">Transcription regulation</keyword>
<organism>
    <name type="scientific">Xenopus laevis</name>
    <name type="common">African clawed frog</name>
    <dbReference type="NCBI Taxonomy" id="8355"/>
    <lineage>
        <taxon>Eukaryota</taxon>
        <taxon>Metazoa</taxon>
        <taxon>Chordata</taxon>
        <taxon>Craniata</taxon>
        <taxon>Vertebrata</taxon>
        <taxon>Euteleostomi</taxon>
        <taxon>Amphibia</taxon>
        <taxon>Batrachia</taxon>
        <taxon>Anura</taxon>
        <taxon>Pipoidea</taxon>
        <taxon>Pipidae</taxon>
        <taxon>Xenopodinae</taxon>
        <taxon>Xenopus</taxon>
        <taxon>Xenopus</taxon>
    </lineage>
</organism>
<feature type="chain" id="PRO_0000305916" description="Mediator of RNA polymerase II transcription subunit 24">
    <location>
        <begin position="1"/>
        <end position="988"/>
    </location>
</feature>
<feature type="short sequence motif" description="LXXLL motif 1">
    <location>
        <begin position="128"/>
        <end position="132"/>
    </location>
</feature>
<feature type="short sequence motif" description="LXXLL motif 2">
    <location>
        <begin position="341"/>
        <end position="345"/>
    </location>
</feature>
<feature type="short sequence motif" description="LXXLL motif 3">
    <location>
        <begin position="445"/>
        <end position="449"/>
    </location>
</feature>
<feature type="short sequence motif" description="LXXLL motif 4">
    <location>
        <begin position="555"/>
        <end position="559"/>
    </location>
</feature>
<feature type="short sequence motif" description="LXXLL motif 5">
    <location>
        <begin position="786"/>
        <end position="790"/>
    </location>
</feature>
<feature type="short sequence motif" description="LXXLL motif 6">
    <location>
        <begin position="856"/>
        <end position="860"/>
    </location>
</feature>
<comment type="function">
    <text evidence="1">Component of the Mediator complex, a coactivator involved in the regulated transcription of nearly all RNA polymerase II-dependent genes. Mediator functions as a bridge to convey information from gene-specific regulatory proteins to the basal RNA polymerase II transcription machinery. Mediator is recruited to promoters by direct interactions with regulatory proteins and serves as a scaffold for the assembly of a functional preinitiation complex with RNA polymerase II and the general transcription factors (By similarity).</text>
</comment>
<comment type="subunit">
    <text evidence="1">Component of the Mediator complex.</text>
</comment>
<comment type="subcellular location">
    <subcellularLocation>
        <location evidence="2">Nucleus</location>
    </subcellularLocation>
</comment>
<comment type="similarity">
    <text evidence="2">Belongs to the Mediator complex subunit 24 family.</text>
</comment>
<gene>
    <name type="primary">med24</name>
</gene>
<evidence type="ECO:0000250" key="1"/>
<evidence type="ECO:0000305" key="2"/>